<organism>
    <name type="scientific">Streptococcus suis (strain 98HAH33)</name>
    <dbReference type="NCBI Taxonomy" id="391296"/>
    <lineage>
        <taxon>Bacteria</taxon>
        <taxon>Bacillati</taxon>
        <taxon>Bacillota</taxon>
        <taxon>Bacilli</taxon>
        <taxon>Lactobacillales</taxon>
        <taxon>Streptococcaceae</taxon>
        <taxon>Streptococcus</taxon>
    </lineage>
</organism>
<keyword id="KW-0131">Cell cycle</keyword>
<keyword id="KW-0132">Cell division</keyword>
<keyword id="KW-0159">Chromosome partition</keyword>
<keyword id="KW-0963">Cytoplasm</keyword>
<gene>
    <name evidence="1" type="primary">scpA</name>
    <name type="ordered locus">SSU98_1713</name>
</gene>
<name>SCPA_STRS2</name>
<protein>
    <recommendedName>
        <fullName evidence="1">Segregation and condensation protein A</fullName>
    </recommendedName>
</protein>
<proteinExistence type="inferred from homology"/>
<dbReference type="EMBL" id="CP000408">
    <property type="protein sequence ID" value="ABP92871.1"/>
    <property type="molecule type" value="Genomic_DNA"/>
</dbReference>
<dbReference type="SMR" id="A4W3D2"/>
<dbReference type="KEGG" id="ssv:SSU98_1713"/>
<dbReference type="HOGENOM" id="CLU_038686_3_3_9"/>
<dbReference type="GO" id="GO:0005737">
    <property type="term" value="C:cytoplasm"/>
    <property type="evidence" value="ECO:0007669"/>
    <property type="project" value="UniProtKB-SubCell"/>
</dbReference>
<dbReference type="GO" id="GO:0051301">
    <property type="term" value="P:cell division"/>
    <property type="evidence" value="ECO:0007669"/>
    <property type="project" value="UniProtKB-KW"/>
</dbReference>
<dbReference type="GO" id="GO:0007059">
    <property type="term" value="P:chromosome segregation"/>
    <property type="evidence" value="ECO:0007669"/>
    <property type="project" value="UniProtKB-UniRule"/>
</dbReference>
<dbReference type="GO" id="GO:0006260">
    <property type="term" value="P:DNA replication"/>
    <property type="evidence" value="ECO:0007669"/>
    <property type="project" value="UniProtKB-UniRule"/>
</dbReference>
<dbReference type="Gene3D" id="6.10.250.2410">
    <property type="match status" value="1"/>
</dbReference>
<dbReference type="Gene3D" id="1.10.10.580">
    <property type="entry name" value="Structural maintenance of chromosome 1. Chain E"/>
    <property type="match status" value="1"/>
</dbReference>
<dbReference type="HAMAP" id="MF_01805">
    <property type="entry name" value="ScpA"/>
    <property type="match status" value="1"/>
</dbReference>
<dbReference type="InterPro" id="IPR003768">
    <property type="entry name" value="ScpA"/>
</dbReference>
<dbReference type="InterPro" id="IPR023093">
    <property type="entry name" value="ScpA-like_C"/>
</dbReference>
<dbReference type="NCBIfam" id="NF000993">
    <property type="entry name" value="PRK00104.1-2"/>
    <property type="match status" value="1"/>
</dbReference>
<dbReference type="PANTHER" id="PTHR33969">
    <property type="entry name" value="SEGREGATION AND CONDENSATION PROTEIN A"/>
    <property type="match status" value="1"/>
</dbReference>
<dbReference type="PANTHER" id="PTHR33969:SF2">
    <property type="entry name" value="SEGREGATION AND CONDENSATION PROTEIN A"/>
    <property type="match status" value="1"/>
</dbReference>
<dbReference type="Pfam" id="PF02616">
    <property type="entry name" value="SMC_ScpA"/>
    <property type="match status" value="1"/>
</dbReference>
<comment type="function">
    <text evidence="1">Participates in chromosomal partition during cell division. May act via the formation of a condensin-like complex containing Smc and ScpB that pull DNA away from mid-cell into both cell halves.</text>
</comment>
<comment type="subunit">
    <text evidence="1">Component of a cohesin-like complex composed of ScpA, ScpB and the Smc homodimer, in which ScpA and ScpB bind to the head domain of Smc. The presence of the three proteins is required for the association of the complex with DNA.</text>
</comment>
<comment type="subcellular location">
    <subcellularLocation>
        <location evidence="1">Cytoplasm</location>
    </subcellularLocation>
    <text evidence="1">Associated with two foci at the outer edges of the nucleoid region in young cells, and at four foci within both cell halves in older cells.</text>
</comment>
<comment type="similarity">
    <text evidence="1">Belongs to the ScpA family.</text>
</comment>
<feature type="chain" id="PRO_1000069986" description="Segregation and condensation protein A">
    <location>
        <begin position="1"/>
        <end position="239"/>
    </location>
</feature>
<evidence type="ECO:0000255" key="1">
    <source>
        <dbReference type="HAMAP-Rule" id="MF_01805"/>
    </source>
</evidence>
<sequence length="239" mass="27993">MDIKLKDFEGPLDLLLHLVSKYQVDIYEVPITEVIEQYLAYIATLQAMRLEVAGEYMLMASQLMVIKSRRLLPKVVEQIDPEDDPEMDLLDQLEEYRKFKLLSEKLGEQHDERANYFSKPKLDLIYDDVQLAKDKTVIDIFLAFSKVMAEKQASLRQSHATIARDEYKIEDMMDFVRSRFETGPRLELRQLFQESQDVNEMITIFLATLELVKVHEIVLEQTETFGDIYLVRSEDESLS</sequence>
<reference key="1">
    <citation type="journal article" date="2007" name="PLoS ONE">
        <title>A glimpse of streptococcal toxic shock syndrome from comparative genomics of S. suis 2 Chinese isolates.</title>
        <authorList>
            <person name="Chen C."/>
            <person name="Tang J."/>
            <person name="Dong W."/>
            <person name="Wang C."/>
            <person name="Feng Y."/>
            <person name="Wang J."/>
            <person name="Zheng F."/>
            <person name="Pan X."/>
            <person name="Liu D."/>
            <person name="Li M."/>
            <person name="Song Y."/>
            <person name="Zhu X."/>
            <person name="Sun H."/>
            <person name="Feng T."/>
            <person name="Guo Z."/>
            <person name="Ju A."/>
            <person name="Ge J."/>
            <person name="Dong Y."/>
            <person name="Sun W."/>
            <person name="Jiang Y."/>
            <person name="Wang J."/>
            <person name="Yan J."/>
            <person name="Yang H."/>
            <person name="Wang X."/>
            <person name="Gao G.F."/>
            <person name="Yang R."/>
            <person name="Wang J."/>
            <person name="Yu J."/>
        </authorList>
    </citation>
    <scope>NUCLEOTIDE SEQUENCE [LARGE SCALE GENOMIC DNA]</scope>
    <source>
        <strain>98HAH33</strain>
    </source>
</reference>
<accession>A4W3D2</accession>